<gene>
    <name evidence="4" type="primary">selenot2</name>
    <name evidence="7" type="synonym">selt2</name>
    <name evidence="7" type="synonym">sept2</name>
    <name type="ORF">zgc:112046</name>
</gene>
<keyword id="KW-0676">Redox-active center</keyword>
<keyword id="KW-1185">Reference proteome</keyword>
<keyword id="KW-0712">Selenocysteine</keyword>
<keyword id="KW-0732">Signal</keyword>
<comment type="tissue specificity">
    <text evidence="3">Widely expressed in the embryo.</text>
</comment>
<comment type="PTM">
    <text evidence="1">May contain a selenide-sulfide bond between Cys-62 and Sec-65. This bond is speculated to serve as redox-active pair (By similarity).</text>
</comment>
<comment type="similarity">
    <text evidence="4">Belongs to the SelWTH family. Selenoprotein T subfamily.</text>
</comment>
<comment type="sequence caution" evidence="4">
    <conflict type="erroneous termination">
        <sequence resource="EMBL-CDS" id="AAH95658"/>
    </conflict>
    <text>Truncated C-terminus.</text>
</comment>
<sequence>MAEYSQTGILTALLLFTVVTVKDIYVGRNSVTQQENTGPDINTQRQNKHTFYTGPVLKFQYCISUGYSKVFQEYSRSISQLYPDIRIEGDNYPPKPINKYLGNFLSYFKLLAIALIVTGQNPFQMFGMNTPRIWAWGQENKIFSCLMAFFISNMLETHFLSTGAFEITLNDIPIWSKLQSGYVPNIQELFQILDNHLKMNQADKMNFPSP</sequence>
<feature type="signal peptide" evidence="2">
    <location>
        <begin position="1"/>
        <end position="21"/>
    </location>
</feature>
<feature type="chain" id="PRO_0000252043" description="Selenoprotein T2" evidence="2">
    <location>
        <begin position="22"/>
        <end position="210"/>
    </location>
</feature>
<feature type="non-standard amino acid" description="Selenocysteine" evidence="6">
    <location>
        <position position="65"/>
    </location>
</feature>
<feature type="cross-link" description="Cysteinyl-selenocysteine (Cys-Sec)" evidence="2">
    <location>
        <begin position="62"/>
        <end position="65"/>
    </location>
</feature>
<feature type="sequence conflict" description="In Ref. 2; AAO86702." evidence="4" ref="2">
    <original>D</original>
    <variation>N</variation>
    <location>
        <position position="40"/>
    </location>
</feature>
<accession>Q502K9</accession>
<accession>Q802G4</accession>
<name>SELT2_DANRE</name>
<organism>
    <name type="scientific">Danio rerio</name>
    <name type="common">Zebrafish</name>
    <name type="synonym">Brachydanio rerio</name>
    <dbReference type="NCBI Taxonomy" id="7955"/>
    <lineage>
        <taxon>Eukaryota</taxon>
        <taxon>Metazoa</taxon>
        <taxon>Chordata</taxon>
        <taxon>Craniata</taxon>
        <taxon>Vertebrata</taxon>
        <taxon>Euteleostomi</taxon>
        <taxon>Actinopterygii</taxon>
        <taxon>Neopterygii</taxon>
        <taxon>Teleostei</taxon>
        <taxon>Ostariophysi</taxon>
        <taxon>Cypriniformes</taxon>
        <taxon>Danionidae</taxon>
        <taxon>Danioninae</taxon>
        <taxon>Danio</taxon>
    </lineage>
</organism>
<dbReference type="EMBL" id="BC095658">
    <property type="protein sequence ID" value="AAH95658.1"/>
    <property type="status" value="ALT_SEQ"/>
    <property type="molecule type" value="mRNA"/>
</dbReference>
<dbReference type="EMBL" id="AY216588">
    <property type="protein sequence ID" value="AAO86702.1"/>
    <property type="molecule type" value="mRNA"/>
</dbReference>
<dbReference type="RefSeq" id="NP_001091957.2">
    <property type="nucleotide sequence ID" value="NM_001098487.2"/>
</dbReference>
<dbReference type="FunCoup" id="Q502K9">
    <property type="interactions" value="188"/>
</dbReference>
<dbReference type="STRING" id="7955.ENSDARP00000114858"/>
<dbReference type="PaxDb" id="7955-ENSDARP00000114858"/>
<dbReference type="Ensembl" id="ENSDART00000143486">
    <property type="protein sequence ID" value="ENSDARP00000114858"/>
    <property type="gene ID" value="ENSDARG00000023220"/>
</dbReference>
<dbReference type="GeneID" id="352917"/>
<dbReference type="KEGG" id="dre:352917"/>
<dbReference type="AGR" id="ZFIN:ZDB-GENE-030411-4"/>
<dbReference type="CTD" id="352917"/>
<dbReference type="ZFIN" id="ZDB-GENE-030411-4">
    <property type="gene designation" value="selenot2"/>
</dbReference>
<dbReference type="eggNOG" id="KOG3286">
    <property type="taxonomic scope" value="Eukaryota"/>
</dbReference>
<dbReference type="HOGENOM" id="CLU_113870_1_0_1"/>
<dbReference type="InParanoid" id="Q502K9"/>
<dbReference type="OMA" id="SWWSHLQ"/>
<dbReference type="OrthoDB" id="60822at2759"/>
<dbReference type="PhylomeDB" id="Q502K9"/>
<dbReference type="TreeFam" id="TF321235"/>
<dbReference type="PRO" id="PR:Q502K9"/>
<dbReference type="Proteomes" id="UP000000437">
    <property type="component" value="Alternate scaffold 14"/>
</dbReference>
<dbReference type="Proteomes" id="UP000000437">
    <property type="component" value="Chromosome 14"/>
</dbReference>
<dbReference type="Bgee" id="ENSDARG00000023220">
    <property type="expression patterns" value="Expressed in somite and 27 other cell types or tissues"/>
</dbReference>
<dbReference type="ExpressionAtlas" id="Q502K9">
    <property type="expression patterns" value="baseline and differential"/>
</dbReference>
<dbReference type="GO" id="GO:0005789">
    <property type="term" value="C:endoplasmic reticulum membrane"/>
    <property type="evidence" value="ECO:0000318"/>
    <property type="project" value="GO_Central"/>
</dbReference>
<dbReference type="GO" id="GO:0004791">
    <property type="term" value="F:thioredoxin-disulfide reductase (NADPH) activity"/>
    <property type="evidence" value="ECO:0000318"/>
    <property type="project" value="GO_Central"/>
</dbReference>
<dbReference type="GO" id="GO:0045454">
    <property type="term" value="P:cell redox homeostasis"/>
    <property type="evidence" value="ECO:0000318"/>
    <property type="project" value="GO_Central"/>
</dbReference>
<dbReference type="Gene3D" id="3.40.30.10">
    <property type="entry name" value="Glutaredoxin"/>
    <property type="match status" value="1"/>
</dbReference>
<dbReference type="InterPro" id="IPR011893">
    <property type="entry name" value="Selenoprotein_Rdx-typ"/>
</dbReference>
<dbReference type="InterPro" id="IPR019389">
    <property type="entry name" value="Selenoprotein_T"/>
</dbReference>
<dbReference type="InterPro" id="IPR036249">
    <property type="entry name" value="Thioredoxin-like_sf"/>
</dbReference>
<dbReference type="NCBIfam" id="TIGR02174">
    <property type="entry name" value="CXXU_selWTH"/>
    <property type="match status" value="1"/>
</dbReference>
<dbReference type="PANTHER" id="PTHR13544">
    <property type="entry name" value="SELENOPROTEIN T"/>
    <property type="match status" value="1"/>
</dbReference>
<dbReference type="PANTHER" id="PTHR13544:SF6">
    <property type="entry name" value="SELENOPROTEIN T2"/>
    <property type="match status" value="1"/>
</dbReference>
<dbReference type="Pfam" id="PF10262">
    <property type="entry name" value="Rdx"/>
    <property type="match status" value="1"/>
</dbReference>
<dbReference type="SUPFAM" id="SSF52833">
    <property type="entry name" value="Thioredoxin-like"/>
    <property type="match status" value="1"/>
</dbReference>
<proteinExistence type="evidence at transcript level"/>
<reference evidence="5" key="1">
    <citation type="submission" date="2005-05" db="EMBL/GenBank/DDBJ databases">
        <authorList>
            <consortium name="NIH - Zebrafish Gene Collection (ZGC) project"/>
        </authorList>
    </citation>
    <scope>NUCLEOTIDE SEQUENCE [LARGE SCALE MRNA]</scope>
    <source>
        <tissue evidence="5">Olfactory epithelium</tissue>
    </source>
</reference>
<reference evidence="4 6" key="2">
    <citation type="journal article" date="2003" name="Gene Expr. Patterns">
        <title>Spatial and temporal expression patterns of selenoprotein genes during embryogenesis in zebrafish.</title>
        <authorList>
            <person name="Thisse C."/>
            <person name="Degrave A."/>
            <person name="Kryukov G.V."/>
            <person name="Gladyshev V.N."/>
            <person name="Obrecht-Pflumio S."/>
            <person name="Krol A."/>
            <person name="Thisse B."/>
            <person name="Lescure A."/>
        </authorList>
    </citation>
    <scope>NUCLEOTIDE SEQUENCE [MRNA] OF 1-173</scope>
    <scope>TISSUE SPECIFICITY</scope>
    <source>
        <tissue evidence="3">Kidney</tissue>
    </source>
</reference>
<evidence type="ECO:0000250" key="1"/>
<evidence type="ECO:0000255" key="2"/>
<evidence type="ECO:0000269" key="3">
    <source>
    </source>
</evidence>
<evidence type="ECO:0000305" key="4"/>
<evidence type="ECO:0000312" key="5">
    <source>
        <dbReference type="EMBL" id="AAH95658.1"/>
    </source>
</evidence>
<evidence type="ECO:0000312" key="6">
    <source>
        <dbReference type="EMBL" id="AAO86702.1"/>
    </source>
</evidence>
<evidence type="ECO:0000312" key="7">
    <source>
        <dbReference type="ZFIN" id="ZDB-GENE-030411-4"/>
    </source>
</evidence>
<protein>
    <recommendedName>
        <fullName evidence="4">Selenoprotein T2</fullName>
    </recommendedName>
</protein>